<protein>
    <recommendedName>
        <fullName>Peroxynitrite isomerase 2</fullName>
        <ecNumber evidence="1">5.99.-.-</ecNumber>
    </recommendedName>
    <alternativeName>
        <fullName>Ferric nitrobindin</fullName>
        <shortName>Nb(III)</shortName>
    </alternativeName>
</protein>
<keyword id="KW-0349">Heme</keyword>
<keyword id="KW-0408">Iron</keyword>
<keyword id="KW-0413">Isomerase</keyword>
<keyword id="KW-0479">Metal-binding</keyword>
<keyword id="KW-1185">Reference proteome</keyword>
<gene>
    <name type="ordered locus">MMAR_1995</name>
</gene>
<name>NB2_MYCMM</name>
<sequence length="161" mass="17354">MPADLHPDLDALAPLLGTWAGQGSGEYPTIEPFEYLEEVVFSHVGKPFLVYAQKTRAVADGAPLHAETGYLRVPKPGQVELVLAHPSGITEIEVGTYSASGGVIEMEMVTTAIGMTPTAKEVTALSRSFRMVGDELSYRLRMGAVGLPLQHHLGARLRRKS</sequence>
<proteinExistence type="inferred from homology"/>
<dbReference type="EC" id="5.99.-.-" evidence="1"/>
<dbReference type="EMBL" id="CP000854">
    <property type="protein sequence ID" value="ACC40445.1"/>
    <property type="molecule type" value="Genomic_DNA"/>
</dbReference>
<dbReference type="RefSeq" id="WP_012393780.1">
    <property type="nucleotide sequence ID" value="NC_010612.1"/>
</dbReference>
<dbReference type="SMR" id="B2HLY1"/>
<dbReference type="STRING" id="216594.MMAR_1995"/>
<dbReference type="KEGG" id="mmi:MMAR_1995"/>
<dbReference type="eggNOG" id="COG4044">
    <property type="taxonomic scope" value="Bacteria"/>
</dbReference>
<dbReference type="HOGENOM" id="CLU_085483_1_0_11"/>
<dbReference type="OrthoDB" id="4804006at2"/>
<dbReference type="Proteomes" id="UP000001190">
    <property type="component" value="Chromosome"/>
</dbReference>
<dbReference type="GO" id="GO:0020037">
    <property type="term" value="F:heme binding"/>
    <property type="evidence" value="ECO:0007669"/>
    <property type="project" value="UniProtKB-UniRule"/>
</dbReference>
<dbReference type="GO" id="GO:0046872">
    <property type="term" value="F:metal ion binding"/>
    <property type="evidence" value="ECO:0007669"/>
    <property type="project" value="UniProtKB-KW"/>
</dbReference>
<dbReference type="GO" id="GO:0062213">
    <property type="term" value="F:peroxynitrite isomerase activity"/>
    <property type="evidence" value="ECO:0007669"/>
    <property type="project" value="UniProtKB-UniRule"/>
</dbReference>
<dbReference type="CDD" id="cd07828">
    <property type="entry name" value="lipocalin_heme-bd-THAP4-like"/>
    <property type="match status" value="1"/>
</dbReference>
<dbReference type="Gene3D" id="2.40.128.20">
    <property type="match status" value="1"/>
</dbReference>
<dbReference type="HAMAP" id="MF_01297">
    <property type="entry name" value="nitrobindin"/>
    <property type="match status" value="1"/>
</dbReference>
<dbReference type="InterPro" id="IPR012674">
    <property type="entry name" value="Calycin"/>
</dbReference>
<dbReference type="InterPro" id="IPR022939">
    <property type="entry name" value="Nb(III)_bact/plant"/>
</dbReference>
<dbReference type="InterPro" id="IPR045165">
    <property type="entry name" value="Nitrobindin"/>
</dbReference>
<dbReference type="InterPro" id="IPR054873">
    <property type="entry name" value="PeroxynitIsom"/>
</dbReference>
<dbReference type="InterPro" id="IPR014878">
    <property type="entry name" value="THAP4-like_heme-bd"/>
</dbReference>
<dbReference type="NCBIfam" id="NF045819">
    <property type="entry name" value="PeroxynitIsom"/>
    <property type="match status" value="1"/>
</dbReference>
<dbReference type="PANTHER" id="PTHR15854:SF4">
    <property type="entry name" value="PEROXYNITRITE ISOMERASE THAP4"/>
    <property type="match status" value="1"/>
</dbReference>
<dbReference type="PANTHER" id="PTHR15854">
    <property type="entry name" value="THAP4 PROTEIN"/>
    <property type="match status" value="1"/>
</dbReference>
<dbReference type="Pfam" id="PF08768">
    <property type="entry name" value="THAP4_heme-bd"/>
    <property type="match status" value="1"/>
</dbReference>
<dbReference type="SUPFAM" id="SSF50814">
    <property type="entry name" value="Lipocalins"/>
    <property type="match status" value="1"/>
</dbReference>
<accession>B2HLY1</accession>
<reference key="1">
    <citation type="journal article" date="2008" name="Genome Res.">
        <title>Insights from the complete genome sequence of Mycobacterium marinum on the evolution of Mycobacterium tuberculosis.</title>
        <authorList>
            <person name="Stinear T.P."/>
            <person name="Seemann T."/>
            <person name="Harrison P.F."/>
            <person name="Jenkin G.A."/>
            <person name="Davies J.K."/>
            <person name="Johnson P.D."/>
            <person name="Abdellah Z."/>
            <person name="Arrowsmith C."/>
            <person name="Chillingworth T."/>
            <person name="Churcher C."/>
            <person name="Clarke K."/>
            <person name="Cronin A."/>
            <person name="Davis P."/>
            <person name="Goodhead I."/>
            <person name="Holroyd N."/>
            <person name="Jagels K."/>
            <person name="Lord A."/>
            <person name="Moule S."/>
            <person name="Mungall K."/>
            <person name="Norbertczak H."/>
            <person name="Quail M.A."/>
            <person name="Rabbinowitsch E."/>
            <person name="Walker D."/>
            <person name="White B."/>
            <person name="Whitehead S."/>
            <person name="Small P.L."/>
            <person name="Brosch R."/>
            <person name="Ramakrishnan L."/>
            <person name="Fischbach M.A."/>
            <person name="Parkhill J."/>
            <person name="Cole S.T."/>
        </authorList>
    </citation>
    <scope>NUCLEOTIDE SEQUENCE [LARGE SCALE GENOMIC DNA]</scope>
    <source>
        <strain>ATCC BAA-535 / M</strain>
    </source>
</reference>
<feature type="chain" id="PRO_0000356923" description="Peroxynitrite isomerase 2">
    <location>
        <begin position="1"/>
        <end position="161"/>
    </location>
</feature>
<feature type="short sequence motif" description="GXWXGXG" evidence="1">
    <location>
        <begin position="17"/>
        <end position="23"/>
    </location>
</feature>
<feature type="binding site" description="axial binding residue" evidence="1">
    <location>
        <position position="152"/>
    </location>
    <ligand>
        <name>heme b</name>
        <dbReference type="ChEBI" id="CHEBI:60344"/>
    </ligand>
    <ligandPart>
        <name>Fe</name>
        <dbReference type="ChEBI" id="CHEBI:18248"/>
    </ligandPart>
</feature>
<evidence type="ECO:0000255" key="1">
    <source>
        <dbReference type="HAMAP-Rule" id="MF_01297"/>
    </source>
</evidence>
<organism>
    <name type="scientific">Mycobacterium marinum (strain ATCC BAA-535 / M)</name>
    <dbReference type="NCBI Taxonomy" id="216594"/>
    <lineage>
        <taxon>Bacteria</taxon>
        <taxon>Bacillati</taxon>
        <taxon>Actinomycetota</taxon>
        <taxon>Actinomycetes</taxon>
        <taxon>Mycobacteriales</taxon>
        <taxon>Mycobacteriaceae</taxon>
        <taxon>Mycobacterium</taxon>
        <taxon>Mycobacterium ulcerans group</taxon>
    </lineage>
</organism>
<comment type="function">
    <text evidence="1">Heme-binding protein able to scavenge peroxynitrite and to protect free L-tyrosine against peroxynitrite-mediated nitration, by acting as a peroxynitrite isomerase that converts peroxynitrite to nitrate. Therefore, this protein likely plays a role in peroxynitrite sensing and in the detoxification of reactive nitrogen and oxygen species (RNS and ROS, respectively). Is able to bind nitric oxide (NO) in vitro, but may act as a sensor of peroxynitrite levels in vivo.</text>
</comment>
<comment type="catalytic activity">
    <reaction evidence="1">
        <text>peroxynitrite = nitrate</text>
        <dbReference type="Rhea" id="RHEA:63116"/>
        <dbReference type="ChEBI" id="CHEBI:17632"/>
        <dbReference type="ChEBI" id="CHEBI:25941"/>
    </reaction>
    <physiologicalReaction direction="left-to-right" evidence="1">
        <dbReference type="Rhea" id="RHEA:63117"/>
    </physiologicalReaction>
</comment>
<comment type="cofactor">
    <cofactor evidence="1">
        <name>heme b</name>
        <dbReference type="ChEBI" id="CHEBI:60344"/>
    </cofactor>
    <text evidence="1">Binds 1 heme b group per subunit, that coordinates a highly solvent-exposed Fe(III) atom.</text>
</comment>
<comment type="pathway">
    <text evidence="1">Nitrogen metabolism.</text>
</comment>
<comment type="subunit">
    <text evidence="1">Homodimer.</text>
</comment>
<comment type="domain">
    <text evidence="1">Forms a 10-stranded antiparallel beta-barrel structure able to accommodate a hydrophobic ligand in its interior. In fact, this fold hosts the heme group, which is located in a wide surface cleft.</text>
</comment>
<comment type="similarity">
    <text evidence="1">Belongs to the nitrobindin family.</text>
</comment>